<dbReference type="EC" id="2.4.2.-" evidence="1"/>
<dbReference type="EMBL" id="CP001860">
    <property type="protein sequence ID" value="ADB61367.1"/>
    <property type="molecule type" value="Genomic_DNA"/>
</dbReference>
<dbReference type="RefSeq" id="WP_012943647.1">
    <property type="nucleotide sequence ID" value="NC_013743.1"/>
</dbReference>
<dbReference type="SMR" id="D2RVT8"/>
<dbReference type="STRING" id="543526.Htur_2490"/>
<dbReference type="GeneID" id="8743100"/>
<dbReference type="KEGG" id="htu:Htur_2490"/>
<dbReference type="eggNOG" id="arCOG00030">
    <property type="taxonomic scope" value="Archaea"/>
</dbReference>
<dbReference type="HOGENOM" id="CLU_126376_0_0_2"/>
<dbReference type="OrthoDB" id="8323at2157"/>
<dbReference type="Proteomes" id="UP000001903">
    <property type="component" value="Chromosome"/>
</dbReference>
<dbReference type="GO" id="GO:0016740">
    <property type="term" value="F:transferase activity"/>
    <property type="evidence" value="ECO:0007669"/>
    <property type="project" value="UniProtKB-KW"/>
</dbReference>
<dbReference type="GO" id="GO:0006166">
    <property type="term" value="P:purine ribonucleoside salvage"/>
    <property type="evidence" value="ECO:0007669"/>
    <property type="project" value="UniProtKB-KW"/>
</dbReference>
<dbReference type="CDD" id="cd06223">
    <property type="entry name" value="PRTases_typeI"/>
    <property type="match status" value="1"/>
</dbReference>
<dbReference type="Gene3D" id="3.40.50.2020">
    <property type="match status" value="1"/>
</dbReference>
<dbReference type="HAMAP" id="MF_01467">
    <property type="entry name" value="Hypx_phosphoribosyltr"/>
    <property type="match status" value="1"/>
</dbReference>
<dbReference type="InterPro" id="IPR026597">
    <property type="entry name" value="HGPRTase-like"/>
</dbReference>
<dbReference type="InterPro" id="IPR000836">
    <property type="entry name" value="PRibTrfase_dom"/>
</dbReference>
<dbReference type="InterPro" id="IPR029057">
    <property type="entry name" value="PRTase-like"/>
</dbReference>
<dbReference type="InterPro" id="IPR050118">
    <property type="entry name" value="Pur/Pyrimidine_PRTase"/>
</dbReference>
<dbReference type="NCBIfam" id="NF040646">
    <property type="entry name" value="HPT_Archaea"/>
    <property type="match status" value="1"/>
</dbReference>
<dbReference type="NCBIfam" id="NF002635">
    <property type="entry name" value="PRK02304.1-4"/>
    <property type="match status" value="1"/>
</dbReference>
<dbReference type="PANTHER" id="PTHR43864">
    <property type="entry name" value="HYPOXANTHINE/GUANINE PHOSPHORIBOSYLTRANSFERASE"/>
    <property type="match status" value="1"/>
</dbReference>
<dbReference type="PANTHER" id="PTHR43864:SF1">
    <property type="entry name" value="XANTHINE PHOSPHORIBOSYLTRANSFERASE"/>
    <property type="match status" value="1"/>
</dbReference>
<dbReference type="Pfam" id="PF00156">
    <property type="entry name" value="Pribosyltran"/>
    <property type="match status" value="1"/>
</dbReference>
<dbReference type="SUPFAM" id="SSF53271">
    <property type="entry name" value="PRTase-like"/>
    <property type="match status" value="1"/>
</dbReference>
<dbReference type="PROSITE" id="PS00103">
    <property type="entry name" value="PUR_PYR_PR_TRANSFER"/>
    <property type="match status" value="1"/>
</dbReference>
<organism>
    <name type="scientific">Haloterrigena turkmenica (strain ATCC 51198 / DSM 5511 / JCM 9101 / NCIMB 13204 / VKM B-1734 / 4k)</name>
    <name type="common">Halococcus turkmenicus</name>
    <dbReference type="NCBI Taxonomy" id="543526"/>
    <lineage>
        <taxon>Archaea</taxon>
        <taxon>Methanobacteriati</taxon>
        <taxon>Methanobacteriota</taxon>
        <taxon>Stenosarchaea group</taxon>
        <taxon>Halobacteria</taxon>
        <taxon>Halobacteriales</taxon>
        <taxon>Natrialbaceae</taxon>
        <taxon>Haloterrigena</taxon>
    </lineage>
</organism>
<feature type="chain" id="PRO_0000415462" description="HGPRTase-like protein 3">
    <location>
        <begin position="1"/>
        <end position="186"/>
    </location>
</feature>
<evidence type="ECO:0000255" key="1">
    <source>
        <dbReference type="HAMAP-Rule" id="MF_01467"/>
    </source>
</evidence>
<accession>D2RVT8</accession>
<name>HPRL3_HALTV</name>
<gene>
    <name type="ordered locus">Htur_2490</name>
</gene>
<keyword id="KW-0660">Purine salvage</keyword>
<keyword id="KW-0808">Transferase</keyword>
<sequence>MDPTLKQLARSLREAPVVDRDGYEYFVHGVTDGVPPLDPAVLEAIADGIRERIDLEGVDTLVAPEAMGIHHGTALSLATRIPLVVVRKRSYGFPEEVAVHQETSYGESDLYLNGVDAGDRVVVVDDVLSSGGTIEAVCEALEAVGAEIVDIVTVLRRVDADHGDISRPVTSLLDVRVRDGALEVVE</sequence>
<proteinExistence type="inferred from homology"/>
<reference key="1">
    <citation type="journal article" date="2010" name="Stand. Genomic Sci.">
        <title>Complete genome sequence of Haloterrigena turkmenica type strain (4k).</title>
        <authorList>
            <person name="Saunders E."/>
            <person name="Tindall B.J."/>
            <person name="Fahnrich R."/>
            <person name="Lapidus A."/>
            <person name="Copeland A."/>
            <person name="Del Rio T.G."/>
            <person name="Lucas S."/>
            <person name="Chen F."/>
            <person name="Tice H."/>
            <person name="Cheng J.F."/>
            <person name="Han C."/>
            <person name="Detter J.C."/>
            <person name="Bruce D."/>
            <person name="Goodwin L."/>
            <person name="Chain P."/>
            <person name="Pitluck S."/>
            <person name="Pati A."/>
            <person name="Ivanova N."/>
            <person name="Mavromatis K."/>
            <person name="Chen A."/>
            <person name="Palaniappan K."/>
            <person name="Land M."/>
            <person name="Hauser L."/>
            <person name="Chang Y.J."/>
            <person name="Jeffries C.D."/>
            <person name="Brettin T."/>
            <person name="Rohde M."/>
            <person name="Goker M."/>
            <person name="Bristow J."/>
            <person name="Eisen J.A."/>
            <person name="Markowitz V."/>
            <person name="Hugenholtz P."/>
            <person name="Klenk H.P."/>
            <person name="Kyrpides N.C."/>
        </authorList>
    </citation>
    <scope>NUCLEOTIDE SEQUENCE [LARGE SCALE GENOMIC DNA]</scope>
    <source>
        <strain>ATCC 51198 / DSM 5511 / JCM 9101 / NCIMB 13204 / VKM B-1734 / 4k</strain>
    </source>
</reference>
<comment type="function">
    <text evidence="1">May catalyze a purine salvage reaction, the substrate is unknown.</text>
</comment>
<comment type="similarity">
    <text evidence="1">Belongs to the purine/pyrimidine phosphoribosyltransferase family. Archaeal HPRT subfamily.</text>
</comment>
<protein>
    <recommendedName>
        <fullName evidence="1">HGPRTase-like protein 3</fullName>
        <ecNumber evidence="1">2.4.2.-</ecNumber>
    </recommendedName>
</protein>